<sequence>MNPKRSFQALILTLHNYWADKGCAVLQPYDMEVGAGTFHPATTLRALGPKPWKAAYVQPSRRPSDGRYGENPNRLQHYYQYQVILKPNPSNLQELYLGSLKAIGLDPLLHDVRFVEDDWESPTLGAWGLGWECWCDGMEVSQFTYFQQVCGIECSPVAGELTYGLERLAMYVQGVDNVYDLNFNGREGEEKISYGDVFLQAEQEYSRHNFEFADTSMLHRHFIDAEKECLALLAAGAPGDNDNQRLHKCVFPAYDQCIKASHIFNLLNARGVISVTERERYIARVRDLAKACGEAFLLTDAGGLNWNRAA</sequence>
<name>SYGA_AGRFC</name>
<protein>
    <recommendedName>
        <fullName evidence="1">Glycine--tRNA ligase alpha subunit</fullName>
        <ecNumber evidence="1">6.1.1.14</ecNumber>
    </recommendedName>
    <alternativeName>
        <fullName evidence="1">Glycyl-tRNA synthetase alpha subunit</fullName>
        <shortName evidence="1">GlyRS</shortName>
    </alternativeName>
</protein>
<accession>Q8UHP1</accession>
<reference key="1">
    <citation type="journal article" date="2001" name="Science">
        <title>The genome of the natural genetic engineer Agrobacterium tumefaciens C58.</title>
        <authorList>
            <person name="Wood D.W."/>
            <person name="Setubal J.C."/>
            <person name="Kaul R."/>
            <person name="Monks D.E."/>
            <person name="Kitajima J.P."/>
            <person name="Okura V.K."/>
            <person name="Zhou Y."/>
            <person name="Chen L."/>
            <person name="Wood G.E."/>
            <person name="Almeida N.F. Jr."/>
            <person name="Woo L."/>
            <person name="Chen Y."/>
            <person name="Paulsen I.T."/>
            <person name="Eisen J.A."/>
            <person name="Karp P.D."/>
            <person name="Bovee D. Sr."/>
            <person name="Chapman P."/>
            <person name="Clendenning J."/>
            <person name="Deatherage G."/>
            <person name="Gillet W."/>
            <person name="Grant C."/>
            <person name="Kutyavin T."/>
            <person name="Levy R."/>
            <person name="Li M.-J."/>
            <person name="McClelland E."/>
            <person name="Palmieri A."/>
            <person name="Raymond C."/>
            <person name="Rouse G."/>
            <person name="Saenphimmachak C."/>
            <person name="Wu Z."/>
            <person name="Romero P."/>
            <person name="Gordon D."/>
            <person name="Zhang S."/>
            <person name="Yoo H."/>
            <person name="Tao Y."/>
            <person name="Biddle P."/>
            <person name="Jung M."/>
            <person name="Krespan W."/>
            <person name="Perry M."/>
            <person name="Gordon-Kamm B."/>
            <person name="Liao L."/>
            <person name="Kim S."/>
            <person name="Hendrick C."/>
            <person name="Zhao Z.-Y."/>
            <person name="Dolan M."/>
            <person name="Chumley F."/>
            <person name="Tingey S.V."/>
            <person name="Tomb J.-F."/>
            <person name="Gordon M.P."/>
            <person name="Olson M.V."/>
            <person name="Nester E.W."/>
        </authorList>
    </citation>
    <scope>NUCLEOTIDE SEQUENCE [LARGE SCALE GENOMIC DNA]</scope>
    <source>
        <strain>C58 / ATCC 33970</strain>
    </source>
</reference>
<reference key="2">
    <citation type="journal article" date="2001" name="Science">
        <title>Genome sequence of the plant pathogen and biotechnology agent Agrobacterium tumefaciens C58.</title>
        <authorList>
            <person name="Goodner B."/>
            <person name="Hinkle G."/>
            <person name="Gattung S."/>
            <person name="Miller N."/>
            <person name="Blanchard M."/>
            <person name="Qurollo B."/>
            <person name="Goldman B.S."/>
            <person name="Cao Y."/>
            <person name="Askenazi M."/>
            <person name="Halling C."/>
            <person name="Mullin L."/>
            <person name="Houmiel K."/>
            <person name="Gordon J."/>
            <person name="Vaudin M."/>
            <person name="Iartchouk O."/>
            <person name="Epp A."/>
            <person name="Liu F."/>
            <person name="Wollam C."/>
            <person name="Allinger M."/>
            <person name="Doughty D."/>
            <person name="Scott C."/>
            <person name="Lappas C."/>
            <person name="Markelz B."/>
            <person name="Flanagan C."/>
            <person name="Crowell C."/>
            <person name="Gurson J."/>
            <person name="Lomo C."/>
            <person name="Sear C."/>
            <person name="Strub G."/>
            <person name="Cielo C."/>
            <person name="Slater S."/>
        </authorList>
    </citation>
    <scope>NUCLEOTIDE SEQUENCE [LARGE SCALE GENOMIC DNA]</scope>
    <source>
        <strain>C58 / ATCC 33970</strain>
    </source>
</reference>
<proteinExistence type="inferred from homology"/>
<dbReference type="EC" id="6.1.1.14" evidence="1"/>
<dbReference type="EMBL" id="AE007869">
    <property type="protein sequence ID" value="AAK86446.2"/>
    <property type="molecule type" value="Genomic_DNA"/>
</dbReference>
<dbReference type="PIR" id="AI2654">
    <property type="entry name" value="AI2654"/>
</dbReference>
<dbReference type="PIR" id="E97436">
    <property type="entry name" value="E97436"/>
</dbReference>
<dbReference type="RefSeq" id="NP_353661.2">
    <property type="nucleotide sequence ID" value="NC_003062.2"/>
</dbReference>
<dbReference type="SMR" id="Q8UHP1"/>
<dbReference type="STRING" id="176299.Atu0639"/>
<dbReference type="EnsemblBacteria" id="AAK86446">
    <property type="protein sequence ID" value="AAK86446"/>
    <property type="gene ID" value="Atu0639"/>
</dbReference>
<dbReference type="KEGG" id="atu:Atu0639"/>
<dbReference type="PATRIC" id="fig|176299.10.peg.631"/>
<dbReference type="eggNOG" id="COG0752">
    <property type="taxonomic scope" value="Bacteria"/>
</dbReference>
<dbReference type="HOGENOM" id="CLU_057066_1_0_5"/>
<dbReference type="OrthoDB" id="9802183at2"/>
<dbReference type="PhylomeDB" id="Q8UHP1"/>
<dbReference type="BioCyc" id="AGRO:ATU0639-MONOMER"/>
<dbReference type="Proteomes" id="UP000000813">
    <property type="component" value="Chromosome circular"/>
</dbReference>
<dbReference type="GO" id="GO:0005829">
    <property type="term" value="C:cytosol"/>
    <property type="evidence" value="ECO:0007669"/>
    <property type="project" value="TreeGrafter"/>
</dbReference>
<dbReference type="GO" id="GO:0005524">
    <property type="term" value="F:ATP binding"/>
    <property type="evidence" value="ECO:0007669"/>
    <property type="project" value="UniProtKB-UniRule"/>
</dbReference>
<dbReference type="GO" id="GO:0004820">
    <property type="term" value="F:glycine-tRNA ligase activity"/>
    <property type="evidence" value="ECO:0007669"/>
    <property type="project" value="UniProtKB-UniRule"/>
</dbReference>
<dbReference type="GO" id="GO:0006426">
    <property type="term" value="P:glycyl-tRNA aminoacylation"/>
    <property type="evidence" value="ECO:0007669"/>
    <property type="project" value="UniProtKB-UniRule"/>
</dbReference>
<dbReference type="CDD" id="cd00733">
    <property type="entry name" value="GlyRS_alpha_core"/>
    <property type="match status" value="1"/>
</dbReference>
<dbReference type="FunFam" id="3.30.930.10:FF:000006">
    <property type="entry name" value="Glycine--tRNA ligase alpha subunit"/>
    <property type="match status" value="1"/>
</dbReference>
<dbReference type="Gene3D" id="3.30.930.10">
    <property type="entry name" value="Bira Bifunctional Protein, Domain 2"/>
    <property type="match status" value="1"/>
</dbReference>
<dbReference type="Gene3D" id="1.20.58.180">
    <property type="entry name" value="Class II aaRS and biotin synthetases, domain 2"/>
    <property type="match status" value="1"/>
</dbReference>
<dbReference type="HAMAP" id="MF_00254">
    <property type="entry name" value="Gly_tRNA_synth_alpha"/>
    <property type="match status" value="1"/>
</dbReference>
<dbReference type="InterPro" id="IPR045864">
    <property type="entry name" value="aa-tRNA-synth_II/BPL/LPL"/>
</dbReference>
<dbReference type="InterPro" id="IPR006194">
    <property type="entry name" value="Gly-tRNA-synth_heterodimer"/>
</dbReference>
<dbReference type="InterPro" id="IPR002310">
    <property type="entry name" value="Gly-tRNA_ligase_asu"/>
</dbReference>
<dbReference type="NCBIfam" id="TIGR00388">
    <property type="entry name" value="glyQ"/>
    <property type="match status" value="1"/>
</dbReference>
<dbReference type="NCBIfam" id="NF006827">
    <property type="entry name" value="PRK09348.1"/>
    <property type="match status" value="1"/>
</dbReference>
<dbReference type="PANTHER" id="PTHR30075:SF2">
    <property type="entry name" value="GLYCINE--TRNA LIGASE, CHLOROPLASTIC_MITOCHONDRIAL 2"/>
    <property type="match status" value="1"/>
</dbReference>
<dbReference type="PANTHER" id="PTHR30075">
    <property type="entry name" value="GLYCYL-TRNA SYNTHETASE"/>
    <property type="match status" value="1"/>
</dbReference>
<dbReference type="Pfam" id="PF02091">
    <property type="entry name" value="tRNA-synt_2e"/>
    <property type="match status" value="1"/>
</dbReference>
<dbReference type="PRINTS" id="PR01044">
    <property type="entry name" value="TRNASYNTHGA"/>
</dbReference>
<dbReference type="SUPFAM" id="SSF55681">
    <property type="entry name" value="Class II aaRS and biotin synthetases"/>
    <property type="match status" value="1"/>
</dbReference>
<dbReference type="PROSITE" id="PS50861">
    <property type="entry name" value="AA_TRNA_LIGASE_II_GLYAB"/>
    <property type="match status" value="1"/>
</dbReference>
<feature type="chain" id="PRO_0000072823" description="Glycine--tRNA ligase alpha subunit">
    <location>
        <begin position="1"/>
        <end position="310"/>
    </location>
</feature>
<keyword id="KW-0030">Aminoacyl-tRNA synthetase</keyword>
<keyword id="KW-0067">ATP-binding</keyword>
<keyword id="KW-0963">Cytoplasm</keyword>
<keyword id="KW-0436">Ligase</keyword>
<keyword id="KW-0547">Nucleotide-binding</keyword>
<keyword id="KW-0648">Protein biosynthesis</keyword>
<keyword id="KW-1185">Reference proteome</keyword>
<organism>
    <name type="scientific">Agrobacterium fabrum (strain C58 / ATCC 33970)</name>
    <name type="common">Agrobacterium tumefaciens (strain C58)</name>
    <dbReference type="NCBI Taxonomy" id="176299"/>
    <lineage>
        <taxon>Bacteria</taxon>
        <taxon>Pseudomonadati</taxon>
        <taxon>Pseudomonadota</taxon>
        <taxon>Alphaproteobacteria</taxon>
        <taxon>Hyphomicrobiales</taxon>
        <taxon>Rhizobiaceae</taxon>
        <taxon>Rhizobium/Agrobacterium group</taxon>
        <taxon>Agrobacterium</taxon>
        <taxon>Agrobacterium tumefaciens complex</taxon>
    </lineage>
</organism>
<comment type="catalytic activity">
    <reaction evidence="1">
        <text>tRNA(Gly) + glycine + ATP = glycyl-tRNA(Gly) + AMP + diphosphate</text>
        <dbReference type="Rhea" id="RHEA:16013"/>
        <dbReference type="Rhea" id="RHEA-COMP:9664"/>
        <dbReference type="Rhea" id="RHEA-COMP:9683"/>
        <dbReference type="ChEBI" id="CHEBI:30616"/>
        <dbReference type="ChEBI" id="CHEBI:33019"/>
        <dbReference type="ChEBI" id="CHEBI:57305"/>
        <dbReference type="ChEBI" id="CHEBI:78442"/>
        <dbReference type="ChEBI" id="CHEBI:78522"/>
        <dbReference type="ChEBI" id="CHEBI:456215"/>
        <dbReference type="EC" id="6.1.1.14"/>
    </reaction>
</comment>
<comment type="subunit">
    <text evidence="1">Tetramer of two alpha and two beta subunits.</text>
</comment>
<comment type="subcellular location">
    <subcellularLocation>
        <location evidence="1">Cytoplasm</location>
    </subcellularLocation>
</comment>
<comment type="similarity">
    <text evidence="1">Belongs to the class-II aminoacyl-tRNA synthetase family.</text>
</comment>
<evidence type="ECO:0000255" key="1">
    <source>
        <dbReference type="HAMAP-Rule" id="MF_00254"/>
    </source>
</evidence>
<gene>
    <name evidence="1" type="primary">glyQ</name>
    <name type="ordered locus">Atu0639</name>
    <name type="ORF">AGR_C_1133</name>
</gene>